<keyword id="KW-0238">DNA-binding</keyword>
<keyword id="KW-0240">DNA-directed RNA polymerase</keyword>
<keyword id="KW-0548">Nucleotidyltransferase</keyword>
<keyword id="KW-0539">Nucleus</keyword>
<keyword id="KW-0597">Phosphoprotein</keyword>
<keyword id="KW-1185">Reference proteome</keyword>
<keyword id="KW-0804">Transcription</keyword>
<keyword id="KW-0808">Transferase</keyword>
<protein>
    <recommendedName>
        <fullName>RNA polymerase II-associated protein 1</fullName>
    </recommendedName>
</protein>
<comment type="function">
    <text evidence="1">Forms an interface between the RNA polymerase II enzyme and chaperone/scaffolding protein, suggesting that it is required to connect RNA polymerase II to regulators of protein complex formation. Required for interaction of the RNA polymerase II complex with acetylated histone H3 (By similarity).</text>
</comment>
<comment type="subunit">
    <text evidence="1">Part of an RNA polymerase II complex that contains POLR2A, POLR2B, POLR2C, POLR2D, POLR2E, POLR2F, POLR2G, POLR2H, POLR2I, POLR2J, POLR2K, POLR2L, RPAP1, FCP1 plus the general transcription factors TFIIB and TFIIF.</text>
</comment>
<comment type="subcellular location">
    <subcellularLocation>
        <location evidence="1">Nucleus</location>
    </subcellularLocation>
</comment>
<comment type="similarity">
    <text evidence="4">Belongs to the RPAP1 family.</text>
</comment>
<organism>
    <name type="scientific">Bos taurus</name>
    <name type="common">Bovine</name>
    <dbReference type="NCBI Taxonomy" id="9913"/>
    <lineage>
        <taxon>Eukaryota</taxon>
        <taxon>Metazoa</taxon>
        <taxon>Chordata</taxon>
        <taxon>Craniata</taxon>
        <taxon>Vertebrata</taxon>
        <taxon>Euteleostomi</taxon>
        <taxon>Mammalia</taxon>
        <taxon>Eutheria</taxon>
        <taxon>Laurasiatheria</taxon>
        <taxon>Artiodactyla</taxon>
        <taxon>Ruminantia</taxon>
        <taxon>Pecora</taxon>
        <taxon>Bovidae</taxon>
        <taxon>Bovinae</taxon>
        <taxon>Bos</taxon>
    </lineage>
</organism>
<accession>A0JN53</accession>
<dbReference type="EMBL" id="BC126520">
    <property type="protein sequence ID" value="AAI26521.1"/>
    <property type="molecule type" value="mRNA"/>
</dbReference>
<dbReference type="RefSeq" id="NP_001071452.1">
    <property type="nucleotide sequence ID" value="NM_001077984.2"/>
</dbReference>
<dbReference type="RefSeq" id="XP_005211635.1">
    <property type="nucleotide sequence ID" value="XM_005211578.5"/>
</dbReference>
<dbReference type="RefSeq" id="XP_005211636.1">
    <property type="nucleotide sequence ID" value="XM_005211579.4"/>
</dbReference>
<dbReference type="RefSeq" id="XP_005211637.1">
    <property type="nucleotide sequence ID" value="XM_005211580.5"/>
</dbReference>
<dbReference type="RefSeq" id="XP_024853377.1">
    <property type="nucleotide sequence ID" value="XM_024997609.1"/>
</dbReference>
<dbReference type="RefSeq" id="XP_024853378.1">
    <property type="nucleotide sequence ID" value="XM_024997610.2"/>
</dbReference>
<dbReference type="SMR" id="A0JN53"/>
<dbReference type="FunCoup" id="A0JN53">
    <property type="interactions" value="4522"/>
</dbReference>
<dbReference type="STRING" id="9913.ENSBTAP00000071505"/>
<dbReference type="PaxDb" id="9913-ENSBTAP00000002220"/>
<dbReference type="GeneID" id="531362"/>
<dbReference type="KEGG" id="bta:531362"/>
<dbReference type="CTD" id="26015"/>
<dbReference type="VEuPathDB" id="HostDB:ENSBTAG00000001693"/>
<dbReference type="eggNOG" id="KOG1894">
    <property type="taxonomic scope" value="Eukaryota"/>
</dbReference>
<dbReference type="eggNOG" id="KOG4732">
    <property type="taxonomic scope" value="Eukaryota"/>
</dbReference>
<dbReference type="HOGENOM" id="CLU_005296_1_0_1"/>
<dbReference type="InParanoid" id="A0JN53"/>
<dbReference type="OMA" id="KYFLQCV"/>
<dbReference type="OrthoDB" id="348201at2759"/>
<dbReference type="TreeFam" id="TF324391"/>
<dbReference type="Proteomes" id="UP000009136">
    <property type="component" value="Chromosome 10"/>
</dbReference>
<dbReference type="Bgee" id="ENSBTAG00000001693">
    <property type="expression patterns" value="Expressed in choroid plexus and 104 other cell types or tissues"/>
</dbReference>
<dbReference type="GO" id="GO:0000428">
    <property type="term" value="C:DNA-directed RNA polymerase complex"/>
    <property type="evidence" value="ECO:0007669"/>
    <property type="project" value="UniProtKB-KW"/>
</dbReference>
<dbReference type="GO" id="GO:0005634">
    <property type="term" value="C:nucleus"/>
    <property type="evidence" value="ECO:0007669"/>
    <property type="project" value="UniProtKB-SubCell"/>
</dbReference>
<dbReference type="GO" id="GO:0003677">
    <property type="term" value="F:DNA binding"/>
    <property type="evidence" value="ECO:0007669"/>
    <property type="project" value="UniProtKB-KW"/>
</dbReference>
<dbReference type="GO" id="GO:0016779">
    <property type="term" value="F:nucleotidyltransferase activity"/>
    <property type="evidence" value="ECO:0007669"/>
    <property type="project" value="UniProtKB-KW"/>
</dbReference>
<dbReference type="GO" id="GO:0006366">
    <property type="term" value="P:transcription by RNA polymerase II"/>
    <property type="evidence" value="ECO:0007669"/>
    <property type="project" value="InterPro"/>
</dbReference>
<dbReference type="InterPro" id="IPR013929">
    <property type="entry name" value="RNA_pol_II_AP1_C"/>
</dbReference>
<dbReference type="InterPro" id="IPR013930">
    <property type="entry name" value="RNA_pol_II_AP1_N"/>
</dbReference>
<dbReference type="InterPro" id="IPR039913">
    <property type="entry name" value="RPAP1/Rba50"/>
</dbReference>
<dbReference type="PANTHER" id="PTHR21483">
    <property type="entry name" value="RNA POLYMERASE II-ASSOCIATED PROTEIN 1"/>
    <property type="match status" value="1"/>
</dbReference>
<dbReference type="PANTHER" id="PTHR21483:SF18">
    <property type="entry name" value="RNA POLYMERASE II-ASSOCIATED PROTEIN 1"/>
    <property type="match status" value="1"/>
</dbReference>
<dbReference type="Pfam" id="PF08620">
    <property type="entry name" value="RPAP1_C"/>
    <property type="match status" value="1"/>
</dbReference>
<dbReference type="Pfam" id="PF08621">
    <property type="entry name" value="RPAP1_N"/>
    <property type="match status" value="1"/>
</dbReference>
<feature type="chain" id="PRO_0000284840" description="RNA polymerase II-associated protein 1">
    <location>
        <begin position="1"/>
        <end position="1395"/>
    </location>
</feature>
<feature type="region of interest" description="Disordered" evidence="3">
    <location>
        <begin position="34"/>
        <end position="53"/>
    </location>
</feature>
<feature type="region of interest" description="Disordered" evidence="3">
    <location>
        <begin position="62"/>
        <end position="96"/>
    </location>
</feature>
<feature type="region of interest" description="Disordered" evidence="3">
    <location>
        <begin position="269"/>
        <end position="312"/>
    </location>
</feature>
<feature type="region of interest" description="Disordered" evidence="3">
    <location>
        <begin position="498"/>
        <end position="530"/>
    </location>
</feature>
<feature type="compositionally biased region" description="Pro residues" evidence="3">
    <location>
        <begin position="64"/>
        <end position="74"/>
    </location>
</feature>
<feature type="compositionally biased region" description="Basic and acidic residues" evidence="3">
    <location>
        <begin position="85"/>
        <end position="96"/>
    </location>
</feature>
<feature type="compositionally biased region" description="Basic and acidic residues" evidence="3">
    <location>
        <begin position="269"/>
        <end position="282"/>
    </location>
</feature>
<feature type="compositionally biased region" description="Acidic residues" evidence="3">
    <location>
        <begin position="500"/>
        <end position="510"/>
    </location>
</feature>
<feature type="compositionally biased region" description="Basic and acidic residues" evidence="3">
    <location>
        <begin position="511"/>
        <end position="530"/>
    </location>
</feature>
<feature type="modified residue" description="Phosphothreonine" evidence="2">
    <location>
        <position position="321"/>
    </location>
</feature>
<sequence>MLSRPKPGESEVDLLRFQSQFLAAGATPAVQLVKKGSRRAGDANLEQPPLQDHRDVVMLDSLPDLPPALVPAPPKRARPSPGHLLPEHEDPEERLHRHDQHITAVLTKIIERDTSSMPVNLPVSSGVAFPPVFHRSQGRQGKPVTAGKRSIFAQEIAARRASGAKVSPVREVESILDPPESAMTCEALTPREWGSQPPWNSYSFQGPHLVTGKGLKGQEAEQEAQTIHEENVARLQALAPEEILQEQQRLLAQLDPSLVAFLKSHSCTREQAEEKATREQRPGRPSAEVIGKEAIAPTSASVPRQENELEPETPALALPVTPQKEWLHMDTVELEKLHWTQDLPPLRRQQTQERMQARFSLQGELLAPDMDLPTHLGLHHHGEEAERAGYSLQELFHLTRSQVSQQRALALHVLAQVIGRAQAGEFGDRLVGSVLHLLLDAGFLFLLRFSLDDRVDGVIAAAVRALRALLVAPGDEELLDSTFSWYHGALMFALMPSQEDKEDEDEDEEPPAEKAKTKSPEEGNRPPSDLARHDIIKGLLATNLLPRLRYVLEVTCPGPSVVLDILTVLIRLARHSLESATRVLECPRLVETVVREFLPTSWSPMGSGPTSSLHRVPCAPAMKLLRVLASASRNIAARLLSGFDLRSRLSRFIAEDPQDLALPLEEAETLSTEAFRLWAVAASYGLGSDLYRELYPVLMQALQDVPKELSSPPPRPLAVQRIASLLTLLTQLTLAAGHIAPEHNSHSAEASLLAGSSSVTWTQVSGLQPLVEPCLRQTLKLLPRPEMWSALGPVPTACLLFLDAYYQAWSQQPGLCPEDWLQDMERLSEGLLLPLLKHPSLGSLWDSLGCCSPLCNPQSCAVAPETISSLASLGCAGGHPPLSLAGSASPFPFLTALLSLLNTLGRIHKGLCGQLATVLAAPGLQDYFLRCVAPVAALHLTPFSAWALRHEYHLQYLALTLAQRAATLQPPMSGTDAALCHGMALALLGRLLPGSEHLAHELMLSCVFRLEFLPERASGGPEAADFSDRLSLGSGGDLGCGRGALLAQACQDLPSIRSCYLTHCSLARASLLASQALYRGELQRVPALLLPVPKEPLLPTDWPFLPLIQLYHRASDTPSGLPPADTVGTALRALQWVLVLESWRPRALWAVSPAARLARLMCVFLVDSELFRETPIQRLVAALLARLCQPEVLSNLNLDCPLPGLTSFPDLYANFLEHFEAVSFGDHLFGALILLPLQRRFSVTLRLALFGEHVGALRALGLPLTQLPVSLECYTAPPEDNLALLQLYFRALVTGALRPRWCPVLYAVAVAHVNSFIFSQDPNNSDEIKAACRSMLQKTWLLTDEGLRQHLLHYKLPNSALPEGFELYPQLPPLRQQYLQKLRISGVLPNGVSDT</sequence>
<reference key="1">
    <citation type="submission" date="2006-10" db="EMBL/GenBank/DDBJ databases">
        <authorList>
            <consortium name="NIH - Mammalian Gene Collection (MGC) project"/>
        </authorList>
    </citation>
    <scope>NUCLEOTIDE SEQUENCE [LARGE SCALE MRNA]</scope>
    <source>
        <strain>Hereford</strain>
        <tissue>Fetal skin</tissue>
    </source>
</reference>
<evidence type="ECO:0000250" key="1"/>
<evidence type="ECO:0000250" key="2">
    <source>
        <dbReference type="UniProtKB" id="Q9BWH6"/>
    </source>
</evidence>
<evidence type="ECO:0000256" key="3">
    <source>
        <dbReference type="SAM" id="MobiDB-lite"/>
    </source>
</evidence>
<evidence type="ECO:0000305" key="4"/>
<gene>
    <name type="primary">RPAP1</name>
</gene>
<proteinExistence type="evidence at transcript level"/>
<name>RPAP1_BOVIN</name>